<reference key="1">
    <citation type="journal article" date="2001" name="J. Bacteriol.">
        <title>Vertical transmission of biosynthetic plasmids in aphid endosymbionts (Buchnera).</title>
        <authorList>
            <person name="Wernegreen J.J."/>
            <person name="Moran N.A."/>
        </authorList>
    </citation>
    <scope>NUCLEOTIDE SEQUENCE [GENOMIC DNA]</scope>
</reference>
<name>LEU3_BUCUS</name>
<dbReference type="EC" id="1.1.1.85" evidence="1"/>
<dbReference type="EMBL" id="AF197449">
    <property type="protein sequence ID" value="AAG31381.1"/>
    <property type="molecule type" value="Genomic_DNA"/>
</dbReference>
<dbReference type="UniPathway" id="UPA00048">
    <property type="reaction ID" value="UER00072"/>
</dbReference>
<dbReference type="GO" id="GO:0005829">
    <property type="term" value="C:cytosol"/>
    <property type="evidence" value="ECO:0007669"/>
    <property type="project" value="TreeGrafter"/>
</dbReference>
<dbReference type="GO" id="GO:0003862">
    <property type="term" value="F:3-isopropylmalate dehydrogenase activity"/>
    <property type="evidence" value="ECO:0007669"/>
    <property type="project" value="UniProtKB-UniRule"/>
</dbReference>
<dbReference type="GO" id="GO:0000287">
    <property type="term" value="F:magnesium ion binding"/>
    <property type="evidence" value="ECO:0007669"/>
    <property type="project" value="InterPro"/>
</dbReference>
<dbReference type="GO" id="GO:0051287">
    <property type="term" value="F:NAD binding"/>
    <property type="evidence" value="ECO:0007669"/>
    <property type="project" value="InterPro"/>
</dbReference>
<dbReference type="GO" id="GO:0009098">
    <property type="term" value="P:L-leucine biosynthetic process"/>
    <property type="evidence" value="ECO:0007669"/>
    <property type="project" value="UniProtKB-UniRule"/>
</dbReference>
<dbReference type="FunFam" id="3.40.718.10:FF:000006">
    <property type="entry name" value="3-isopropylmalate dehydrogenase"/>
    <property type="match status" value="1"/>
</dbReference>
<dbReference type="Gene3D" id="3.40.718.10">
    <property type="entry name" value="Isopropylmalate Dehydrogenase"/>
    <property type="match status" value="1"/>
</dbReference>
<dbReference type="HAMAP" id="MF_01033">
    <property type="entry name" value="LeuB_type1"/>
    <property type="match status" value="1"/>
</dbReference>
<dbReference type="InterPro" id="IPR019818">
    <property type="entry name" value="IsoCit/isopropylmalate_DH_CS"/>
</dbReference>
<dbReference type="InterPro" id="IPR024084">
    <property type="entry name" value="IsoPropMal-DH-like_dom"/>
</dbReference>
<dbReference type="InterPro" id="IPR004429">
    <property type="entry name" value="Isopropylmalate_DH"/>
</dbReference>
<dbReference type="NCBIfam" id="TIGR00169">
    <property type="entry name" value="leuB"/>
    <property type="match status" value="1"/>
</dbReference>
<dbReference type="PANTHER" id="PTHR42979">
    <property type="entry name" value="3-ISOPROPYLMALATE DEHYDROGENASE"/>
    <property type="match status" value="1"/>
</dbReference>
<dbReference type="PANTHER" id="PTHR42979:SF1">
    <property type="entry name" value="3-ISOPROPYLMALATE DEHYDROGENASE"/>
    <property type="match status" value="1"/>
</dbReference>
<dbReference type="Pfam" id="PF00180">
    <property type="entry name" value="Iso_dh"/>
    <property type="match status" value="1"/>
</dbReference>
<dbReference type="SMART" id="SM01329">
    <property type="entry name" value="Iso_dh"/>
    <property type="match status" value="1"/>
</dbReference>
<dbReference type="SUPFAM" id="SSF53659">
    <property type="entry name" value="Isocitrate/Isopropylmalate dehydrogenase-like"/>
    <property type="match status" value="1"/>
</dbReference>
<dbReference type="PROSITE" id="PS00470">
    <property type="entry name" value="IDH_IMDH"/>
    <property type="match status" value="1"/>
</dbReference>
<evidence type="ECO:0000255" key="1">
    <source>
        <dbReference type="HAMAP-Rule" id="MF_01033"/>
    </source>
</evidence>
<keyword id="KW-0028">Amino-acid biosynthesis</keyword>
<keyword id="KW-0100">Branched-chain amino acid biosynthesis</keyword>
<keyword id="KW-0963">Cytoplasm</keyword>
<keyword id="KW-0432">Leucine biosynthesis</keyword>
<keyword id="KW-0460">Magnesium</keyword>
<keyword id="KW-0464">Manganese</keyword>
<keyword id="KW-0479">Metal-binding</keyword>
<keyword id="KW-0520">NAD</keyword>
<keyword id="KW-0560">Oxidoreductase</keyword>
<keyword id="KW-0614">Plasmid</keyword>
<organism>
    <name type="scientific">Buchnera aphidicola subsp. Uroleucon solidaginis</name>
    <dbReference type="NCBI Taxonomy" id="118121"/>
    <lineage>
        <taxon>Bacteria</taxon>
        <taxon>Pseudomonadati</taxon>
        <taxon>Pseudomonadota</taxon>
        <taxon>Gammaproteobacteria</taxon>
        <taxon>Enterobacterales</taxon>
        <taxon>Erwiniaceae</taxon>
        <taxon>Buchnera</taxon>
    </lineage>
</organism>
<comment type="function">
    <text evidence="1">Catalyzes the oxidation of 3-carboxy-2-hydroxy-4-methylpentanoate (3-isopropylmalate) to 3-carboxy-4-methyl-2-oxopentanoate. The product decarboxylates to 4-methyl-2 oxopentanoate.</text>
</comment>
<comment type="catalytic activity">
    <reaction evidence="1">
        <text>(2R,3S)-3-isopropylmalate + NAD(+) = 4-methyl-2-oxopentanoate + CO2 + NADH</text>
        <dbReference type="Rhea" id="RHEA:32271"/>
        <dbReference type="ChEBI" id="CHEBI:16526"/>
        <dbReference type="ChEBI" id="CHEBI:17865"/>
        <dbReference type="ChEBI" id="CHEBI:35121"/>
        <dbReference type="ChEBI" id="CHEBI:57540"/>
        <dbReference type="ChEBI" id="CHEBI:57945"/>
        <dbReference type="EC" id="1.1.1.85"/>
    </reaction>
</comment>
<comment type="cofactor">
    <cofactor evidence="1">
        <name>Mg(2+)</name>
        <dbReference type="ChEBI" id="CHEBI:18420"/>
    </cofactor>
    <cofactor evidence="1">
        <name>Mn(2+)</name>
        <dbReference type="ChEBI" id="CHEBI:29035"/>
    </cofactor>
    <text evidence="1">Binds 1 Mg(2+) or Mn(2+) ion per subunit.</text>
</comment>
<comment type="pathway">
    <text evidence="1">Amino-acid biosynthesis; L-leucine biosynthesis; L-leucine from 3-methyl-2-oxobutanoate: step 3/4.</text>
</comment>
<comment type="subunit">
    <text evidence="1">Homodimer.</text>
</comment>
<comment type="subcellular location">
    <subcellularLocation>
        <location evidence="1">Cytoplasm</location>
    </subcellularLocation>
</comment>
<comment type="similarity">
    <text evidence="1">Belongs to the isocitrate and isopropylmalate dehydrogenases family. LeuB type 1 subfamily.</text>
</comment>
<gene>
    <name evidence="1" type="primary">leuB</name>
</gene>
<feature type="chain" id="PRO_0000083670" description="3-isopropylmalate dehydrogenase">
    <location>
        <begin position="1"/>
        <end position="363"/>
    </location>
</feature>
<feature type="binding site" evidence="1">
    <location>
        <begin position="78"/>
        <end position="91"/>
    </location>
    <ligand>
        <name>NAD(+)</name>
        <dbReference type="ChEBI" id="CHEBI:57540"/>
    </ligand>
</feature>
<feature type="binding site" evidence="1">
    <location>
        <position position="99"/>
    </location>
    <ligand>
        <name>substrate</name>
    </ligand>
</feature>
<feature type="binding site" evidence="1">
    <location>
        <position position="109"/>
    </location>
    <ligand>
        <name>substrate</name>
    </ligand>
</feature>
<feature type="binding site" evidence="1">
    <location>
        <position position="138"/>
    </location>
    <ligand>
        <name>substrate</name>
    </ligand>
</feature>
<feature type="binding site" evidence="1">
    <location>
        <position position="227"/>
    </location>
    <ligand>
        <name>Mg(2+)</name>
        <dbReference type="ChEBI" id="CHEBI:18420"/>
    </ligand>
</feature>
<feature type="binding site" evidence="1">
    <location>
        <position position="227"/>
    </location>
    <ligand>
        <name>substrate</name>
    </ligand>
</feature>
<feature type="binding site" evidence="1">
    <location>
        <position position="251"/>
    </location>
    <ligand>
        <name>Mg(2+)</name>
        <dbReference type="ChEBI" id="CHEBI:18420"/>
    </ligand>
</feature>
<feature type="binding site" evidence="1">
    <location>
        <position position="255"/>
    </location>
    <ligand>
        <name>Mg(2+)</name>
        <dbReference type="ChEBI" id="CHEBI:18420"/>
    </ligand>
</feature>
<feature type="binding site" evidence="1">
    <location>
        <begin position="285"/>
        <end position="297"/>
    </location>
    <ligand>
        <name>NAD(+)</name>
        <dbReference type="ChEBI" id="CHEBI:57540"/>
    </ligand>
</feature>
<feature type="site" description="Important for catalysis" evidence="1">
    <location>
        <position position="145"/>
    </location>
</feature>
<feature type="site" description="Important for catalysis" evidence="1">
    <location>
        <position position="195"/>
    </location>
</feature>
<accession>Q9EVI4</accession>
<geneLocation type="plasmid">
    <name>pLeu</name>
    <name>pBAp1</name>
</geneLocation>
<sequence>MKTKYRIAVLPGDGIGPEVMREAYKILNILKNYFSLPIETREFNVGGAAIDQDGVALPKTTLLGCENSDAILFGSXXXXXXXXXXXXXXXXXXXLLPLRKHFNLFGNLRPAQLYSELIHLSPLRSDIINNGFNILCIRELTGGIYFGKPAGRLKKNNIEYAFDTEIYYNYEINRIAHLAFQLAKTRNYKVCSIDKSNVLNSSILWREIVQKVSKNYPDVHLSHLYIDNATMQIIKNPNQFDILLCSNLFGDIISDECAMITGSIGMLPSASLNEKKFGLYEPAGGSAPDIEGKNIANPIAQILSVSMLVRYSMNLKTIADKIDQSVISVLKKGYRTADISNNSHYLKTNEMGDVIASALISGE</sequence>
<proteinExistence type="inferred from homology"/>
<protein>
    <recommendedName>
        <fullName evidence="1">3-isopropylmalate dehydrogenase</fullName>
        <ecNumber evidence="1">1.1.1.85</ecNumber>
    </recommendedName>
    <alternativeName>
        <fullName evidence="1">3-IPM-DH</fullName>
    </alternativeName>
    <alternativeName>
        <fullName evidence="1">Beta-IPM dehydrogenase</fullName>
        <shortName evidence="1">IMDH</shortName>
    </alternativeName>
</protein>